<organism>
    <name type="scientific">Vibrio cholerae serotype O1 (strain ATCC 39315 / El Tor Inaba N16961)</name>
    <dbReference type="NCBI Taxonomy" id="243277"/>
    <lineage>
        <taxon>Bacteria</taxon>
        <taxon>Pseudomonadati</taxon>
        <taxon>Pseudomonadota</taxon>
        <taxon>Gammaproteobacteria</taxon>
        <taxon>Vibrionales</taxon>
        <taxon>Vibrionaceae</taxon>
        <taxon>Vibrio</taxon>
    </lineage>
</organism>
<sequence>MYQDLIRSELTEAADVLQKFLSDDHNIAQIEAAAKLIADSFKQGGKVLSCGNGGSHCDAMHFAEELTGRYRENRPGYPGIAISDPSHLSCVSNDFGYDYVFSRYVEAVGAKGDVLFGLSTSGNSGNILKAIEAAKAKGMKTIALTGKDGGKMAGLADVEIRVPHFGYADRIQEVHIKIIHIIIQLIEKEMA</sequence>
<evidence type="ECO:0000250" key="1"/>
<evidence type="ECO:0000305" key="2"/>
<evidence type="ECO:0007829" key="3">
    <source>
        <dbReference type="PDB" id="1X94"/>
    </source>
</evidence>
<reference key="1">
    <citation type="journal article" date="2000" name="Nature">
        <title>DNA sequence of both chromosomes of the cholera pathogen Vibrio cholerae.</title>
        <authorList>
            <person name="Heidelberg J.F."/>
            <person name="Eisen J.A."/>
            <person name="Nelson W.C."/>
            <person name="Clayton R.A."/>
            <person name="Gwinn M.L."/>
            <person name="Dodson R.J."/>
            <person name="Haft D.H."/>
            <person name="Hickey E.K."/>
            <person name="Peterson J.D."/>
            <person name="Umayam L.A."/>
            <person name="Gill S.R."/>
            <person name="Nelson K.E."/>
            <person name="Read T.D."/>
            <person name="Tettelin H."/>
            <person name="Richardson D.L."/>
            <person name="Ermolaeva M.D."/>
            <person name="Vamathevan J.J."/>
            <person name="Bass S."/>
            <person name="Qin H."/>
            <person name="Dragoi I."/>
            <person name="Sellers P."/>
            <person name="McDonald L.A."/>
            <person name="Utterback T.R."/>
            <person name="Fleischmann R.D."/>
            <person name="Nierman W.C."/>
            <person name="White O."/>
            <person name="Salzberg S.L."/>
            <person name="Smith H.O."/>
            <person name="Colwell R.R."/>
            <person name="Mekalanos J.J."/>
            <person name="Venter J.C."/>
            <person name="Fraser C.M."/>
        </authorList>
    </citation>
    <scope>NUCLEOTIDE SEQUENCE [LARGE SCALE GENOMIC DNA]</scope>
    <source>
        <strain>ATCC 39315 / El Tor Inaba N16961</strain>
    </source>
</reference>
<reference key="2">
    <citation type="journal article" date="2002" name="Microbiology">
        <title>Novel pathways for biosynthesis of nucleotide-activated glycero-manno-heptose precursors of bacterial glycoproteins and cell surface polysaccharides.</title>
        <authorList>
            <person name="Valvano M.A."/>
            <person name="Messner P."/>
            <person name="Kosma P."/>
        </authorList>
    </citation>
    <scope>BIOSYNTHESIS OF NUCLEOTIDE-ACTIVATED GLYCERO-MANNO-HEPTOSE</scope>
</reference>
<reference key="3">
    <citation type="journal article" date="2006" name="Proteins">
        <title>Crystal structures of two putative phosphoheptose isomerases.</title>
        <authorList>
            <person name="Seetharaman J."/>
            <person name="Rajashankar K.R."/>
            <person name="Solorzano V."/>
            <person name="Kniewel R."/>
            <person name="Lima C.D."/>
            <person name="Bonanno J.B."/>
            <person name="Burley S.K."/>
            <person name="Swaminathan S."/>
        </authorList>
    </citation>
    <scope>X-RAY CRYSTALLOGRAPHY (2.5 ANGSTROMS)</scope>
</reference>
<gene>
    <name type="primary">gmhA</name>
    <name type="ordered locus">VC_2230</name>
</gene>
<accession>Q9KPY2</accession>
<proteinExistence type="evidence at protein level"/>
<dbReference type="EC" id="5.3.1.28"/>
<dbReference type="EMBL" id="AE003852">
    <property type="protein sequence ID" value="AAF95374.1"/>
    <property type="molecule type" value="Genomic_DNA"/>
</dbReference>
<dbReference type="PIR" id="B82104">
    <property type="entry name" value="B82104"/>
</dbReference>
<dbReference type="RefSeq" id="NP_231861.1">
    <property type="nucleotide sequence ID" value="NC_002505.1"/>
</dbReference>
<dbReference type="PDB" id="1X94">
    <property type="method" value="X-ray"/>
    <property type="resolution" value="2.50 A"/>
    <property type="chains" value="A/B=1-191"/>
</dbReference>
<dbReference type="PDBsum" id="1X94"/>
<dbReference type="SMR" id="Q9KPY2"/>
<dbReference type="STRING" id="243277.VC_2230"/>
<dbReference type="DNASU" id="2613270"/>
<dbReference type="EnsemblBacteria" id="AAF95374">
    <property type="protein sequence ID" value="AAF95374"/>
    <property type="gene ID" value="VC_2230"/>
</dbReference>
<dbReference type="KEGG" id="vch:VC_2230"/>
<dbReference type="PATRIC" id="fig|243277.26.peg.2127"/>
<dbReference type="eggNOG" id="COG0279">
    <property type="taxonomic scope" value="Bacteria"/>
</dbReference>
<dbReference type="HOGENOM" id="CLU_080999_4_0_6"/>
<dbReference type="BRENDA" id="5.3.1.28">
    <property type="organism ID" value="6626"/>
</dbReference>
<dbReference type="UniPathway" id="UPA00041">
    <property type="reaction ID" value="UER00436"/>
</dbReference>
<dbReference type="UniPathway" id="UPA00958"/>
<dbReference type="EvolutionaryTrace" id="Q9KPY2"/>
<dbReference type="Proteomes" id="UP000000584">
    <property type="component" value="Chromosome 1"/>
</dbReference>
<dbReference type="GO" id="GO:0005829">
    <property type="term" value="C:cytosol"/>
    <property type="evidence" value="ECO:0000318"/>
    <property type="project" value="GO_Central"/>
</dbReference>
<dbReference type="GO" id="GO:0097367">
    <property type="term" value="F:carbohydrate derivative binding"/>
    <property type="evidence" value="ECO:0007669"/>
    <property type="project" value="InterPro"/>
</dbReference>
<dbReference type="GO" id="GO:0008968">
    <property type="term" value="F:D-sedoheptulose 7-phosphate isomerase activity"/>
    <property type="evidence" value="ECO:0000318"/>
    <property type="project" value="GO_Central"/>
</dbReference>
<dbReference type="GO" id="GO:0008270">
    <property type="term" value="F:zinc ion binding"/>
    <property type="evidence" value="ECO:0007669"/>
    <property type="project" value="UniProtKB-UniRule"/>
</dbReference>
<dbReference type="GO" id="GO:2001061">
    <property type="term" value="P:D-glycero-D-manno-heptose 7-phosphate biosynthetic process"/>
    <property type="evidence" value="ECO:0000318"/>
    <property type="project" value="GO_Central"/>
</dbReference>
<dbReference type="GO" id="GO:0009244">
    <property type="term" value="P:lipopolysaccharide core region biosynthetic process"/>
    <property type="evidence" value="ECO:0007669"/>
    <property type="project" value="UniProtKB-UniPathway"/>
</dbReference>
<dbReference type="CDD" id="cd05006">
    <property type="entry name" value="SIS_GmhA"/>
    <property type="match status" value="1"/>
</dbReference>
<dbReference type="FunFam" id="3.40.50.10490:FF:000013">
    <property type="entry name" value="Phosphoheptose isomerase"/>
    <property type="match status" value="1"/>
</dbReference>
<dbReference type="Gene3D" id="3.40.50.10490">
    <property type="entry name" value="Glucose-6-phosphate isomerase like protein, domain 1"/>
    <property type="match status" value="1"/>
</dbReference>
<dbReference type="HAMAP" id="MF_00067">
    <property type="entry name" value="GmhA"/>
    <property type="match status" value="1"/>
</dbReference>
<dbReference type="InterPro" id="IPR035461">
    <property type="entry name" value="GmhA/DiaA"/>
</dbReference>
<dbReference type="InterPro" id="IPR004515">
    <property type="entry name" value="Phosphoheptose_Isoase"/>
</dbReference>
<dbReference type="InterPro" id="IPR001347">
    <property type="entry name" value="SIS_dom"/>
</dbReference>
<dbReference type="InterPro" id="IPR046348">
    <property type="entry name" value="SIS_dom_sf"/>
</dbReference>
<dbReference type="InterPro" id="IPR050099">
    <property type="entry name" value="SIS_GmhA/DiaA_subfam"/>
</dbReference>
<dbReference type="NCBIfam" id="TIGR00441">
    <property type="entry name" value="gmhA"/>
    <property type="match status" value="1"/>
</dbReference>
<dbReference type="NCBIfam" id="NF001628">
    <property type="entry name" value="PRK00414.1"/>
    <property type="match status" value="1"/>
</dbReference>
<dbReference type="PANTHER" id="PTHR30390:SF7">
    <property type="entry name" value="PHOSPHOHEPTOSE ISOMERASE"/>
    <property type="match status" value="1"/>
</dbReference>
<dbReference type="PANTHER" id="PTHR30390">
    <property type="entry name" value="SEDOHEPTULOSE 7-PHOSPHATE ISOMERASE / DNAA INITIATOR-ASSOCIATING FACTOR FOR REPLICATION INITIATION"/>
    <property type="match status" value="1"/>
</dbReference>
<dbReference type="Pfam" id="PF13580">
    <property type="entry name" value="SIS_2"/>
    <property type="match status" value="1"/>
</dbReference>
<dbReference type="SUPFAM" id="SSF53697">
    <property type="entry name" value="SIS domain"/>
    <property type="match status" value="1"/>
</dbReference>
<dbReference type="PROSITE" id="PS51464">
    <property type="entry name" value="SIS"/>
    <property type="match status" value="1"/>
</dbReference>
<keyword id="KW-0002">3D-structure</keyword>
<keyword id="KW-0119">Carbohydrate metabolism</keyword>
<keyword id="KW-0963">Cytoplasm</keyword>
<keyword id="KW-0413">Isomerase</keyword>
<keyword id="KW-0448">Lipopolysaccharide biosynthesis</keyword>
<keyword id="KW-0479">Metal-binding</keyword>
<keyword id="KW-1185">Reference proteome</keyword>
<keyword id="KW-0862">Zinc</keyword>
<comment type="function">
    <text evidence="1">Catalyzes the isomerization of sedoheptulose 7-phosphate in D-glycero-D-manno-heptose 7-phosphate.</text>
</comment>
<comment type="catalytic activity">
    <reaction>
        <text>2 D-sedoheptulose 7-phosphate = D-glycero-alpha-D-manno-heptose 7-phosphate + D-glycero-beta-D-manno-heptose 7-phosphate</text>
        <dbReference type="Rhea" id="RHEA:27489"/>
        <dbReference type="ChEBI" id="CHEBI:57483"/>
        <dbReference type="ChEBI" id="CHEBI:60203"/>
        <dbReference type="ChEBI" id="CHEBI:60204"/>
        <dbReference type="EC" id="5.3.1.28"/>
    </reaction>
</comment>
<comment type="cofactor">
    <cofactor evidence="1">
        <name>Zn(2+)</name>
        <dbReference type="ChEBI" id="CHEBI:29105"/>
    </cofactor>
    <text evidence="1">Binds 1 zinc ion per subunit.</text>
</comment>
<comment type="pathway">
    <text>Carbohydrate biosynthesis; D-glycero-D-manno-heptose 7-phosphate biosynthesis; D-glycero-alpha-D-manno-heptose 7-phosphate and D-glycero-beta-D-manno-heptose 7-phosphate from sedoheptulose 7-phosphate: step 1/1.</text>
</comment>
<comment type="pathway">
    <text>Bacterial outer membrane biogenesis; LPS core biosynthesis.</text>
</comment>
<comment type="subunit">
    <text evidence="1">Homotetramer.</text>
</comment>
<comment type="subcellular location">
    <subcellularLocation>
        <location evidence="1">Cytoplasm</location>
    </subcellularLocation>
</comment>
<comment type="miscellaneous">
    <text evidence="1">The reaction produces a racemic mixture of D-glycero-alpha-D-manno-heptose 7-phosphate and D-glycero-beta-D-manno-heptose 7-phosphate.</text>
</comment>
<comment type="similarity">
    <text evidence="2">Belongs to the SIS family. GmhA subfamily.</text>
</comment>
<name>GMHA_VIBCH</name>
<protein>
    <recommendedName>
        <fullName>Phosphoheptose isomerase</fullName>
        <ecNumber>5.3.1.28</ecNumber>
    </recommendedName>
    <alternativeName>
        <fullName>Sedoheptulose 7-phosphate isomerase</fullName>
    </alternativeName>
</protein>
<feature type="chain" id="PRO_0000136548" description="Phosphoheptose isomerase">
    <location>
        <begin position="1"/>
        <end position="191"/>
    </location>
</feature>
<feature type="domain" description="SIS">
    <location>
        <begin position="37"/>
        <end position="191"/>
    </location>
</feature>
<feature type="binding site" evidence="1">
    <location>
        <begin position="52"/>
        <end position="54"/>
    </location>
    <ligand>
        <name>substrate</name>
    </ligand>
</feature>
<feature type="binding site" evidence="1">
    <location>
        <position position="61"/>
    </location>
    <ligand>
        <name>Zn(2+)</name>
        <dbReference type="ChEBI" id="CHEBI:29105"/>
    </ligand>
</feature>
<feature type="binding site" evidence="1">
    <location>
        <position position="65"/>
    </location>
    <ligand>
        <name>substrate</name>
    </ligand>
</feature>
<feature type="binding site" evidence="1">
    <location>
        <position position="65"/>
    </location>
    <ligand>
        <name>Zn(2+)</name>
        <dbReference type="ChEBI" id="CHEBI:29105"/>
    </ligand>
</feature>
<feature type="binding site" evidence="1">
    <location>
        <begin position="93"/>
        <end position="94"/>
    </location>
    <ligand>
        <name>substrate</name>
    </ligand>
</feature>
<feature type="binding site" evidence="1">
    <location>
        <begin position="119"/>
        <end position="121"/>
    </location>
    <ligand>
        <name>substrate</name>
    </ligand>
</feature>
<feature type="binding site" evidence="1">
    <location>
        <position position="124"/>
    </location>
    <ligand>
        <name>substrate</name>
    </ligand>
</feature>
<feature type="binding site" evidence="1">
    <location>
        <position position="172"/>
    </location>
    <ligand>
        <name>substrate</name>
    </ligand>
</feature>
<feature type="binding site" evidence="1">
    <location>
        <position position="172"/>
    </location>
    <ligand>
        <name>Zn(2+)</name>
        <dbReference type="ChEBI" id="CHEBI:29105"/>
    </ligand>
</feature>
<feature type="binding site" evidence="1">
    <location>
        <position position="180"/>
    </location>
    <ligand>
        <name>Zn(2+)</name>
        <dbReference type="ChEBI" id="CHEBI:29105"/>
    </ligand>
</feature>
<feature type="helix" evidence="3">
    <location>
        <begin position="3"/>
        <end position="21"/>
    </location>
</feature>
<feature type="helix" evidence="3">
    <location>
        <begin position="24"/>
        <end position="41"/>
    </location>
</feature>
<feature type="turn" evidence="3">
    <location>
        <begin position="42"/>
        <end position="44"/>
    </location>
</feature>
<feature type="strand" evidence="3">
    <location>
        <begin position="47"/>
        <end position="50"/>
    </location>
</feature>
<feature type="strand" evidence="3">
    <location>
        <begin position="52"/>
        <end position="54"/>
    </location>
</feature>
<feature type="helix" evidence="3">
    <location>
        <begin position="55"/>
        <end position="70"/>
    </location>
</feature>
<feature type="strand" evidence="3">
    <location>
        <begin position="78"/>
        <end position="81"/>
    </location>
</feature>
<feature type="helix" evidence="3">
    <location>
        <begin position="100"/>
        <end position="108"/>
    </location>
</feature>
<feature type="strand" evidence="3">
    <location>
        <begin position="114"/>
        <end position="122"/>
    </location>
</feature>
<feature type="helix" evidence="3">
    <location>
        <begin position="125"/>
        <end position="137"/>
    </location>
</feature>
<feature type="strand" evidence="3">
    <location>
        <begin position="140"/>
        <end position="146"/>
    </location>
</feature>
<feature type="helix" evidence="3">
    <location>
        <begin position="150"/>
        <end position="152"/>
    </location>
</feature>
<feature type="turn" evidence="3">
    <location>
        <begin position="153"/>
        <end position="155"/>
    </location>
</feature>
<feature type="strand" evidence="3">
    <location>
        <begin position="156"/>
        <end position="163"/>
    </location>
</feature>
<feature type="helix" evidence="3">
    <location>
        <begin position="168"/>
        <end position="189"/>
    </location>
</feature>